<keyword id="KW-0030">Aminoacyl-tRNA synthetase</keyword>
<keyword id="KW-0067">ATP-binding</keyword>
<keyword id="KW-0963">Cytoplasm</keyword>
<keyword id="KW-0436">Ligase</keyword>
<keyword id="KW-0479">Metal-binding</keyword>
<keyword id="KW-0547">Nucleotide-binding</keyword>
<keyword id="KW-0648">Protein biosynthesis</keyword>
<keyword id="KW-0694">RNA-binding</keyword>
<keyword id="KW-0820">tRNA-binding</keyword>
<keyword id="KW-0862">Zinc</keyword>
<dbReference type="EC" id="6.1.1.10" evidence="1"/>
<dbReference type="EMBL" id="CP000680">
    <property type="protein sequence ID" value="ABP84170.1"/>
    <property type="molecule type" value="Genomic_DNA"/>
</dbReference>
<dbReference type="SMR" id="A4XS54"/>
<dbReference type="STRING" id="399739.Pmen_1405"/>
<dbReference type="KEGG" id="pmy:Pmen_1405"/>
<dbReference type="PATRIC" id="fig|399739.8.peg.1426"/>
<dbReference type="eggNOG" id="COG0073">
    <property type="taxonomic scope" value="Bacteria"/>
</dbReference>
<dbReference type="eggNOG" id="COG0143">
    <property type="taxonomic scope" value="Bacteria"/>
</dbReference>
<dbReference type="HOGENOM" id="CLU_009710_7_0_6"/>
<dbReference type="OrthoDB" id="9810191at2"/>
<dbReference type="GO" id="GO:0005829">
    <property type="term" value="C:cytosol"/>
    <property type="evidence" value="ECO:0007669"/>
    <property type="project" value="TreeGrafter"/>
</dbReference>
<dbReference type="GO" id="GO:0005524">
    <property type="term" value="F:ATP binding"/>
    <property type="evidence" value="ECO:0007669"/>
    <property type="project" value="UniProtKB-UniRule"/>
</dbReference>
<dbReference type="GO" id="GO:0046872">
    <property type="term" value="F:metal ion binding"/>
    <property type="evidence" value="ECO:0007669"/>
    <property type="project" value="UniProtKB-KW"/>
</dbReference>
<dbReference type="GO" id="GO:0004825">
    <property type="term" value="F:methionine-tRNA ligase activity"/>
    <property type="evidence" value="ECO:0007669"/>
    <property type="project" value="UniProtKB-UniRule"/>
</dbReference>
<dbReference type="GO" id="GO:0000049">
    <property type="term" value="F:tRNA binding"/>
    <property type="evidence" value="ECO:0007669"/>
    <property type="project" value="UniProtKB-KW"/>
</dbReference>
<dbReference type="GO" id="GO:0006431">
    <property type="term" value="P:methionyl-tRNA aminoacylation"/>
    <property type="evidence" value="ECO:0007669"/>
    <property type="project" value="UniProtKB-UniRule"/>
</dbReference>
<dbReference type="CDD" id="cd07957">
    <property type="entry name" value="Anticodon_Ia_Met"/>
    <property type="match status" value="1"/>
</dbReference>
<dbReference type="CDD" id="cd00814">
    <property type="entry name" value="MetRS_core"/>
    <property type="match status" value="1"/>
</dbReference>
<dbReference type="CDD" id="cd02800">
    <property type="entry name" value="tRNA_bind_EcMetRS_like"/>
    <property type="match status" value="1"/>
</dbReference>
<dbReference type="FunFam" id="1.10.730.10:FF:000005">
    <property type="entry name" value="Methionine--tRNA ligase"/>
    <property type="match status" value="1"/>
</dbReference>
<dbReference type="FunFam" id="2.20.28.20:FF:000001">
    <property type="entry name" value="Methionine--tRNA ligase"/>
    <property type="match status" value="1"/>
</dbReference>
<dbReference type="FunFam" id="2.40.50.140:FF:000042">
    <property type="entry name" value="Methionine--tRNA ligase"/>
    <property type="match status" value="1"/>
</dbReference>
<dbReference type="Gene3D" id="3.40.50.620">
    <property type="entry name" value="HUPs"/>
    <property type="match status" value="1"/>
</dbReference>
<dbReference type="Gene3D" id="1.10.730.10">
    <property type="entry name" value="Isoleucyl-tRNA Synthetase, Domain 1"/>
    <property type="match status" value="1"/>
</dbReference>
<dbReference type="Gene3D" id="2.20.28.20">
    <property type="entry name" value="Methionyl-tRNA synthetase, Zn-domain"/>
    <property type="match status" value="1"/>
</dbReference>
<dbReference type="Gene3D" id="2.40.50.140">
    <property type="entry name" value="Nucleic acid-binding proteins"/>
    <property type="match status" value="1"/>
</dbReference>
<dbReference type="HAMAP" id="MF_00098">
    <property type="entry name" value="Met_tRNA_synth_type1"/>
    <property type="match status" value="1"/>
</dbReference>
<dbReference type="InterPro" id="IPR001412">
    <property type="entry name" value="aa-tRNA-synth_I_CS"/>
</dbReference>
<dbReference type="InterPro" id="IPR041872">
    <property type="entry name" value="Anticodon_Met"/>
</dbReference>
<dbReference type="InterPro" id="IPR004495">
    <property type="entry name" value="Met-tRNA-synth_bsu_C"/>
</dbReference>
<dbReference type="InterPro" id="IPR023458">
    <property type="entry name" value="Met-tRNA_ligase_1"/>
</dbReference>
<dbReference type="InterPro" id="IPR014758">
    <property type="entry name" value="Met-tRNA_synth"/>
</dbReference>
<dbReference type="InterPro" id="IPR015413">
    <property type="entry name" value="Methionyl/Leucyl_tRNA_Synth"/>
</dbReference>
<dbReference type="InterPro" id="IPR033911">
    <property type="entry name" value="MetRS_core"/>
</dbReference>
<dbReference type="InterPro" id="IPR029038">
    <property type="entry name" value="MetRS_Zn"/>
</dbReference>
<dbReference type="InterPro" id="IPR012340">
    <property type="entry name" value="NA-bd_OB-fold"/>
</dbReference>
<dbReference type="InterPro" id="IPR014729">
    <property type="entry name" value="Rossmann-like_a/b/a_fold"/>
</dbReference>
<dbReference type="InterPro" id="IPR002547">
    <property type="entry name" value="tRNA-bd_dom"/>
</dbReference>
<dbReference type="InterPro" id="IPR009080">
    <property type="entry name" value="tRNAsynth_Ia_anticodon-bd"/>
</dbReference>
<dbReference type="NCBIfam" id="TIGR00398">
    <property type="entry name" value="metG"/>
    <property type="match status" value="1"/>
</dbReference>
<dbReference type="NCBIfam" id="TIGR00399">
    <property type="entry name" value="metG_C_term"/>
    <property type="match status" value="1"/>
</dbReference>
<dbReference type="NCBIfam" id="NF001100">
    <property type="entry name" value="PRK00133.1"/>
    <property type="match status" value="1"/>
</dbReference>
<dbReference type="PANTHER" id="PTHR45765">
    <property type="entry name" value="METHIONINE--TRNA LIGASE"/>
    <property type="match status" value="1"/>
</dbReference>
<dbReference type="PANTHER" id="PTHR45765:SF1">
    <property type="entry name" value="METHIONINE--TRNA LIGASE, CYTOPLASMIC"/>
    <property type="match status" value="1"/>
</dbReference>
<dbReference type="Pfam" id="PF19303">
    <property type="entry name" value="Anticodon_3"/>
    <property type="match status" value="1"/>
</dbReference>
<dbReference type="Pfam" id="PF09334">
    <property type="entry name" value="tRNA-synt_1g"/>
    <property type="match status" value="1"/>
</dbReference>
<dbReference type="Pfam" id="PF01588">
    <property type="entry name" value="tRNA_bind"/>
    <property type="match status" value="1"/>
</dbReference>
<dbReference type="PRINTS" id="PR01041">
    <property type="entry name" value="TRNASYNTHMET"/>
</dbReference>
<dbReference type="SUPFAM" id="SSF47323">
    <property type="entry name" value="Anticodon-binding domain of a subclass of class I aminoacyl-tRNA synthetases"/>
    <property type="match status" value="1"/>
</dbReference>
<dbReference type="SUPFAM" id="SSF57770">
    <property type="entry name" value="Methionyl-tRNA synthetase (MetRS), Zn-domain"/>
    <property type="match status" value="1"/>
</dbReference>
<dbReference type="SUPFAM" id="SSF50249">
    <property type="entry name" value="Nucleic acid-binding proteins"/>
    <property type="match status" value="1"/>
</dbReference>
<dbReference type="SUPFAM" id="SSF52374">
    <property type="entry name" value="Nucleotidylyl transferase"/>
    <property type="match status" value="1"/>
</dbReference>
<dbReference type="PROSITE" id="PS00178">
    <property type="entry name" value="AA_TRNA_LIGASE_I"/>
    <property type="match status" value="1"/>
</dbReference>
<dbReference type="PROSITE" id="PS50886">
    <property type="entry name" value="TRBD"/>
    <property type="match status" value="1"/>
</dbReference>
<gene>
    <name evidence="1" type="primary">metG</name>
    <name type="ordered locus">Pmen_1405</name>
</gene>
<name>SYM_ECTM1</name>
<evidence type="ECO:0000255" key="1">
    <source>
        <dbReference type="HAMAP-Rule" id="MF_00098"/>
    </source>
</evidence>
<reference key="1">
    <citation type="submission" date="2007-04" db="EMBL/GenBank/DDBJ databases">
        <title>Complete sequence of Pseudomonas mendocina ymp.</title>
        <authorList>
            <consortium name="US DOE Joint Genome Institute"/>
            <person name="Copeland A."/>
            <person name="Lucas S."/>
            <person name="Lapidus A."/>
            <person name="Barry K."/>
            <person name="Glavina del Rio T."/>
            <person name="Dalin E."/>
            <person name="Tice H."/>
            <person name="Pitluck S."/>
            <person name="Kiss H."/>
            <person name="Brettin T."/>
            <person name="Detter J.C."/>
            <person name="Bruce D."/>
            <person name="Han C."/>
            <person name="Schmutz J."/>
            <person name="Larimer F."/>
            <person name="Land M."/>
            <person name="Hauser L."/>
            <person name="Kyrpides N."/>
            <person name="Mikhailova N."/>
            <person name="Hersman L."/>
            <person name="Dubois J."/>
            <person name="Maurice P."/>
            <person name="Richardson P."/>
        </authorList>
    </citation>
    <scope>NUCLEOTIDE SEQUENCE [LARGE SCALE GENOMIC DNA]</scope>
    <source>
        <strain>ymp</strain>
    </source>
</reference>
<sequence>MTEARKILVTSALPYANGSIHLGHMLEYVQTDMWVRYQKLRGNQAIYVCADDAHGSAIMLRAEKEGITPEQLIDGVRAEHMADFADFGVDFDNYHSTHSQENRELSASIYLALRDKGHIATRAVTQYFDPEKGMFLADRFIKGSCPKCGAEDQYGDNCEKCGATYTPTELKNPRSAISGAVPVLKESQHFFFKLPDFEAMLKQWTRSGALQEAVANKIAEWLDGGLQEWDISRDAPYFGFEIPGEPGKYFYVWLDAPIGYMASFKNLCSKRPELDFDAFWGKDSTAELYHFIGKDIVNFHALFWPAMLEGAGYRKPTAVNVHGYLTVNGQKMSKSRGTFIKARTYLDHLNPEYLRYYYASKLGRGVDDLDLNLEDFVQKVNSDLVGKVVNIASRCAGFIHKGNDGLLVAANPEPELWDAFQAAAPSIAEAYEARDFSRAMREIMALADRANAWIADKAPWALNKVEGKQAEVQEICALGINLFRQLVIMLKPVLPKLAADAEAFLNVKPQTWADLSLPLANHQLNPFNPLLTRIEPAKIEAMVEASKEDLAAEASKPQGNGELAKDPLAAEINFDAFAAVDLRIALIEKCEFVEGADKLLRLSLDIGDEKRNVFSGIKSAYPDPSKLEGRLTLYVANLAPRKMKFGISEGMVLAAGPGGEEIYLLSPDSGAKPGQRVK</sequence>
<proteinExistence type="inferred from homology"/>
<comment type="function">
    <text evidence="1">Is required not only for elongation of protein synthesis but also for the initiation of all mRNA translation through initiator tRNA(fMet) aminoacylation.</text>
</comment>
<comment type="catalytic activity">
    <reaction evidence="1">
        <text>tRNA(Met) + L-methionine + ATP = L-methionyl-tRNA(Met) + AMP + diphosphate</text>
        <dbReference type="Rhea" id="RHEA:13481"/>
        <dbReference type="Rhea" id="RHEA-COMP:9667"/>
        <dbReference type="Rhea" id="RHEA-COMP:9698"/>
        <dbReference type="ChEBI" id="CHEBI:30616"/>
        <dbReference type="ChEBI" id="CHEBI:33019"/>
        <dbReference type="ChEBI" id="CHEBI:57844"/>
        <dbReference type="ChEBI" id="CHEBI:78442"/>
        <dbReference type="ChEBI" id="CHEBI:78530"/>
        <dbReference type="ChEBI" id="CHEBI:456215"/>
        <dbReference type="EC" id="6.1.1.10"/>
    </reaction>
</comment>
<comment type="cofactor">
    <cofactor evidence="1">
        <name>Zn(2+)</name>
        <dbReference type="ChEBI" id="CHEBI:29105"/>
    </cofactor>
    <text evidence="1">Binds 1 zinc ion per subunit.</text>
</comment>
<comment type="subunit">
    <text evidence="1">Homodimer.</text>
</comment>
<comment type="subcellular location">
    <subcellularLocation>
        <location evidence="1">Cytoplasm</location>
    </subcellularLocation>
</comment>
<comment type="similarity">
    <text evidence="1">Belongs to the class-I aminoacyl-tRNA synthetase family. MetG type 1 subfamily.</text>
</comment>
<accession>A4XS54</accession>
<feature type="chain" id="PRO_0000331872" description="Methionine--tRNA ligase">
    <location>
        <begin position="1"/>
        <end position="678"/>
    </location>
</feature>
<feature type="domain" description="tRNA-binding" evidence="1">
    <location>
        <begin position="576"/>
        <end position="678"/>
    </location>
</feature>
<feature type="short sequence motif" description="'HIGH' region">
    <location>
        <begin position="14"/>
        <end position="24"/>
    </location>
</feature>
<feature type="short sequence motif" description="'KMSKS' region">
    <location>
        <begin position="331"/>
        <end position="335"/>
    </location>
</feature>
<feature type="binding site" evidence="1">
    <location>
        <position position="145"/>
    </location>
    <ligand>
        <name>Zn(2+)</name>
        <dbReference type="ChEBI" id="CHEBI:29105"/>
    </ligand>
</feature>
<feature type="binding site" evidence="1">
    <location>
        <position position="148"/>
    </location>
    <ligand>
        <name>Zn(2+)</name>
        <dbReference type="ChEBI" id="CHEBI:29105"/>
    </ligand>
</feature>
<feature type="binding site" evidence="1">
    <location>
        <position position="158"/>
    </location>
    <ligand>
        <name>Zn(2+)</name>
        <dbReference type="ChEBI" id="CHEBI:29105"/>
    </ligand>
</feature>
<feature type="binding site" evidence="1">
    <location>
        <position position="161"/>
    </location>
    <ligand>
        <name>Zn(2+)</name>
        <dbReference type="ChEBI" id="CHEBI:29105"/>
    </ligand>
</feature>
<feature type="binding site" evidence="1">
    <location>
        <position position="334"/>
    </location>
    <ligand>
        <name>ATP</name>
        <dbReference type="ChEBI" id="CHEBI:30616"/>
    </ligand>
</feature>
<protein>
    <recommendedName>
        <fullName evidence="1">Methionine--tRNA ligase</fullName>
        <ecNumber evidence="1">6.1.1.10</ecNumber>
    </recommendedName>
    <alternativeName>
        <fullName evidence="1">Methionyl-tRNA synthetase</fullName>
        <shortName evidence="1">MetRS</shortName>
    </alternativeName>
</protein>
<organism>
    <name type="scientific">Ectopseudomonas mendocina (strain ymp)</name>
    <name type="common">Pseudomonas mendocina</name>
    <dbReference type="NCBI Taxonomy" id="399739"/>
    <lineage>
        <taxon>Bacteria</taxon>
        <taxon>Pseudomonadati</taxon>
        <taxon>Pseudomonadota</taxon>
        <taxon>Gammaproteobacteria</taxon>
        <taxon>Pseudomonadales</taxon>
        <taxon>Pseudomonadaceae</taxon>
        <taxon>Ectopseudomonas</taxon>
    </lineage>
</organism>